<name>RRP4_YEAST</name>
<evidence type="ECO:0000256" key="1">
    <source>
        <dbReference type="SAM" id="MobiDB-lite"/>
    </source>
</evidence>
<evidence type="ECO:0000269" key="2">
    <source>
    </source>
</evidence>
<evidence type="ECO:0000269" key="3">
    <source>
    </source>
</evidence>
<evidence type="ECO:0000269" key="4">
    <source>
    </source>
</evidence>
<evidence type="ECO:0000269" key="5">
    <source>
    </source>
</evidence>
<evidence type="ECO:0000269" key="6">
    <source>
    </source>
</evidence>
<evidence type="ECO:0000269" key="7">
    <source>
    </source>
</evidence>
<evidence type="ECO:0000269" key="8">
    <source>
    </source>
</evidence>
<evidence type="ECO:0000305" key="9"/>
<evidence type="ECO:0007744" key="10">
    <source>
    </source>
</evidence>
<evidence type="ECO:0007744" key="11">
    <source>
    </source>
</evidence>
<evidence type="ECO:0007744" key="12">
    <source>
    </source>
</evidence>
<evidence type="ECO:0007829" key="13">
    <source>
        <dbReference type="PDB" id="4IFD"/>
    </source>
</evidence>
<evidence type="ECO:0007829" key="14">
    <source>
        <dbReference type="PDB" id="4OO1"/>
    </source>
</evidence>
<evidence type="ECO:0007829" key="15">
    <source>
        <dbReference type="PDB" id="5JEA"/>
    </source>
</evidence>
<evidence type="ECO:0007829" key="16">
    <source>
        <dbReference type="PDB" id="5K36"/>
    </source>
</evidence>
<organism>
    <name type="scientific">Saccharomyces cerevisiae (strain ATCC 204508 / S288c)</name>
    <name type="common">Baker's yeast</name>
    <dbReference type="NCBI Taxonomy" id="559292"/>
    <lineage>
        <taxon>Eukaryota</taxon>
        <taxon>Fungi</taxon>
        <taxon>Dikarya</taxon>
        <taxon>Ascomycota</taxon>
        <taxon>Saccharomycotina</taxon>
        <taxon>Saccharomycetes</taxon>
        <taxon>Saccharomycetales</taxon>
        <taxon>Saccharomycetaceae</taxon>
        <taxon>Saccharomyces</taxon>
    </lineage>
</organism>
<feature type="initiator methionine" description="Removed" evidence="12">
    <location>
        <position position="1"/>
    </location>
</feature>
<feature type="chain" id="PRO_0000097455" description="Exosome complex component RRP4">
    <location>
        <begin position="2"/>
        <end position="359"/>
    </location>
</feature>
<feature type="domain" description="S1 motif">
    <location>
        <begin position="107"/>
        <end position="187"/>
    </location>
</feature>
<feature type="region of interest" description="Disordered" evidence="1">
    <location>
        <begin position="242"/>
        <end position="266"/>
    </location>
</feature>
<feature type="compositionally biased region" description="Polar residues" evidence="1">
    <location>
        <begin position="246"/>
        <end position="266"/>
    </location>
</feature>
<feature type="modified residue" description="N-acetylserine" evidence="12">
    <location>
        <position position="2"/>
    </location>
</feature>
<feature type="modified residue" description="Phosphoserine" evidence="10 11">
    <location>
        <position position="28"/>
    </location>
</feature>
<feature type="modified residue" description="Phosphoserine" evidence="10">
    <location>
        <position position="268"/>
    </location>
</feature>
<feature type="mutagenesis site" description="In RRP4-1; temperature-sensitive(ts) lethal mutation." evidence="7">
    <original>L</original>
    <variation>P</variation>
    <location>
        <position position="136"/>
    </location>
</feature>
<feature type="strand" evidence="13">
    <location>
        <begin position="7"/>
        <end position="12"/>
    </location>
</feature>
<feature type="strand" evidence="15">
    <location>
        <begin position="60"/>
        <end position="63"/>
    </location>
</feature>
<feature type="strand" evidence="15">
    <location>
        <begin position="65"/>
        <end position="69"/>
    </location>
</feature>
<feature type="strand" evidence="15">
    <location>
        <begin position="73"/>
        <end position="76"/>
    </location>
</feature>
<feature type="strand" evidence="15">
    <location>
        <begin position="79"/>
        <end position="91"/>
    </location>
</feature>
<feature type="strand" evidence="15">
    <location>
        <begin position="94"/>
        <end position="101"/>
    </location>
</feature>
<feature type="strand" evidence="15">
    <location>
        <begin position="111"/>
        <end position="119"/>
    </location>
</feature>
<feature type="strand" evidence="15">
    <location>
        <begin position="121"/>
        <end position="127"/>
    </location>
</feature>
<feature type="strand" evidence="15">
    <location>
        <begin position="129"/>
        <end position="132"/>
    </location>
</feature>
<feature type="strand" evidence="15">
    <location>
        <begin position="134"/>
        <end position="137"/>
    </location>
</feature>
<feature type="helix" evidence="15">
    <location>
        <begin position="138"/>
        <end position="140"/>
    </location>
</feature>
<feature type="helix" evidence="13">
    <location>
        <begin position="146"/>
        <end position="148"/>
    </location>
</feature>
<feature type="strand" evidence="16">
    <location>
        <begin position="151"/>
        <end position="153"/>
    </location>
</feature>
<feature type="helix" evidence="15">
    <location>
        <begin position="154"/>
        <end position="157"/>
    </location>
</feature>
<feature type="helix" evidence="15">
    <location>
        <begin position="159"/>
        <end position="162"/>
    </location>
</feature>
<feature type="strand" evidence="15">
    <location>
        <begin position="168"/>
        <end position="176"/>
    </location>
</feature>
<feature type="strand" evidence="13">
    <location>
        <begin position="178"/>
        <end position="180"/>
    </location>
</feature>
<feature type="strand" evidence="15">
    <location>
        <begin position="182"/>
        <end position="185"/>
    </location>
</feature>
<feature type="strand" evidence="13">
    <location>
        <begin position="188"/>
        <end position="193"/>
    </location>
</feature>
<feature type="strand" evidence="15">
    <location>
        <begin position="196"/>
        <end position="201"/>
    </location>
</feature>
<feature type="helix" evidence="15">
    <location>
        <begin position="204"/>
        <end position="206"/>
    </location>
</feature>
<feature type="strand" evidence="15">
    <location>
        <begin position="213"/>
        <end position="217"/>
    </location>
</feature>
<feature type="turn" evidence="15">
    <location>
        <begin position="218"/>
        <end position="220"/>
    </location>
</feature>
<feature type="strand" evidence="15">
    <location>
        <begin position="221"/>
        <end position="225"/>
    </location>
</feature>
<feature type="strand" evidence="15">
    <location>
        <begin position="229"/>
        <end position="235"/>
    </location>
</feature>
<feature type="helix" evidence="15">
    <location>
        <begin position="238"/>
        <end position="241"/>
    </location>
</feature>
<feature type="helix" evidence="14">
    <location>
        <begin position="244"/>
        <end position="248"/>
    </location>
</feature>
<feature type="helix" evidence="15">
    <location>
        <begin position="270"/>
        <end position="276"/>
    </location>
</feature>
<feature type="strand" evidence="13">
    <location>
        <begin position="279"/>
        <end position="281"/>
    </location>
</feature>
<feature type="helix" evidence="15">
    <location>
        <begin position="291"/>
        <end position="309"/>
    </location>
</feature>
<feature type="helix" evidence="15">
    <location>
        <begin position="316"/>
        <end position="326"/>
    </location>
</feature>
<feature type="strand" evidence="15">
    <location>
        <begin position="329"/>
        <end position="331"/>
    </location>
</feature>
<feature type="helix" evidence="15">
    <location>
        <begin position="332"/>
        <end position="336"/>
    </location>
</feature>
<feature type="helix" evidence="15">
    <location>
        <begin position="338"/>
        <end position="354"/>
    </location>
</feature>
<proteinExistence type="evidence at protein level"/>
<reference key="1">
    <citation type="journal article" date="1997" name="Cell">
        <title>The exosome: a conserved eukaryotic RNA processing complex containing multiple 3'--&gt;5' exoribonucleases.</title>
        <authorList>
            <person name="Mitchell P."/>
            <person name="Petfalski E."/>
            <person name="Shevchenko A."/>
            <person name="Mann M."/>
            <person name="Tollervey D."/>
        </authorList>
    </citation>
    <scope>NUCLEOTIDE SEQUENCE [GENOMIC DNA]</scope>
    <scope>PROTEIN SEQUENCE OF 94-101; 256-271 AND 306-318</scope>
    <scope>FUNCTION</scope>
    <scope>SUBUNIT</scope>
    <scope>IDENTIFICATION BY MASS SPECTROMETRY</scope>
</reference>
<reference key="2">
    <citation type="journal article" date="1994" name="Science">
        <title>Complete nucleotide sequence of Saccharomyces cerevisiae chromosome VIII.</title>
        <authorList>
            <person name="Johnston M."/>
            <person name="Andrews S."/>
            <person name="Brinkman R."/>
            <person name="Cooper J."/>
            <person name="Ding H."/>
            <person name="Dover J."/>
            <person name="Du Z."/>
            <person name="Favello A."/>
            <person name="Fulton L."/>
            <person name="Gattung S."/>
            <person name="Geisel C."/>
            <person name="Kirsten J."/>
            <person name="Kucaba T."/>
            <person name="Hillier L.W."/>
            <person name="Jier M."/>
            <person name="Johnston L."/>
            <person name="Langston Y."/>
            <person name="Latreille P."/>
            <person name="Louis E.J."/>
            <person name="Macri C."/>
            <person name="Mardis E."/>
            <person name="Menezes S."/>
            <person name="Mouser L."/>
            <person name="Nhan M."/>
            <person name="Rifkin L."/>
            <person name="Riles L."/>
            <person name="St Peter H."/>
            <person name="Trevaskis E."/>
            <person name="Vaughan K."/>
            <person name="Vignati D."/>
            <person name="Wilcox L."/>
            <person name="Wohldman P."/>
            <person name="Waterston R."/>
            <person name="Wilson R."/>
            <person name="Vaudin M."/>
        </authorList>
    </citation>
    <scope>NUCLEOTIDE SEQUENCE [LARGE SCALE GENOMIC DNA]</scope>
    <source>
        <strain>ATCC 204508 / S288c</strain>
    </source>
</reference>
<reference key="3">
    <citation type="journal article" date="2014" name="G3 (Bethesda)">
        <title>The reference genome sequence of Saccharomyces cerevisiae: Then and now.</title>
        <authorList>
            <person name="Engel S.R."/>
            <person name="Dietrich F.S."/>
            <person name="Fisk D.G."/>
            <person name="Binkley G."/>
            <person name="Balakrishnan R."/>
            <person name="Costanzo M.C."/>
            <person name="Dwight S.S."/>
            <person name="Hitz B.C."/>
            <person name="Karra K."/>
            <person name="Nash R.S."/>
            <person name="Weng S."/>
            <person name="Wong E.D."/>
            <person name="Lloyd P."/>
            <person name="Skrzypek M.S."/>
            <person name="Miyasato S.R."/>
            <person name="Simison M."/>
            <person name="Cherry J.M."/>
        </authorList>
    </citation>
    <scope>GENOME REANNOTATION</scope>
    <source>
        <strain>ATCC 204508 / S288c</strain>
    </source>
</reference>
<reference key="4">
    <citation type="journal article" date="1996" name="Genes Dev.">
        <title>The 3' end of yeast 5.8S rRNA is generated by an exonuclease processing mechanism.</title>
        <authorList>
            <person name="Mitchell P."/>
            <person name="Petfalski E."/>
            <person name="Tollervey D."/>
        </authorList>
    </citation>
    <scope>FUNCTION</scope>
    <scope>MUTAGENESIS OF LEU-136</scope>
</reference>
<reference key="5">
    <citation type="journal article" date="1999" name="Genes Dev.">
        <title>The yeast exosome and human PM-Scl are related complexes of 3'--&gt;5' exonucleases.</title>
        <authorList>
            <person name="Allmang C."/>
            <person name="Petfalski E."/>
            <person name="Podtelejnikov A."/>
            <person name="Mann M."/>
            <person name="Tollervey D."/>
            <person name="Mitchell P."/>
        </authorList>
    </citation>
    <scope>IDENTIFICATION IN THE RNA EXOSOME COMPLEX BY MASS SPECTROMETRY</scope>
    <scope>SUBCELLULAR LOCATION</scope>
</reference>
<reference key="6">
    <citation type="journal article" date="2003" name="Mol. Cell. Biol.">
        <title>Rrp47p is an exosome-associated protein required for the 3' processing of stable RNAs.</title>
        <authorList>
            <person name="Mitchell P."/>
            <person name="Petfalski E."/>
            <person name="Houalla R."/>
            <person name="Podtelejnikov A."/>
            <person name="Mann M."/>
            <person name="Tollervey D."/>
        </authorList>
    </citation>
    <scope>INTERACTION WITH LRP1</scope>
</reference>
<reference key="7">
    <citation type="journal article" date="2003" name="Nature">
        <title>Global analysis of protein localization in budding yeast.</title>
        <authorList>
            <person name="Huh W.-K."/>
            <person name="Falvo J.V."/>
            <person name="Gerke L.C."/>
            <person name="Carroll A.S."/>
            <person name="Howson R.W."/>
            <person name="Weissman J.S."/>
            <person name="O'Shea E.K."/>
        </authorList>
    </citation>
    <scope>SUBCELLULAR LOCATION [LARGE SCALE ANALYSIS]</scope>
</reference>
<reference key="8">
    <citation type="journal article" date="2003" name="Nature">
        <title>Global analysis of protein expression in yeast.</title>
        <authorList>
            <person name="Ghaemmaghami S."/>
            <person name="Huh W.-K."/>
            <person name="Bower K."/>
            <person name="Howson R.W."/>
            <person name="Belle A."/>
            <person name="Dephoure N."/>
            <person name="O'Shea E.K."/>
            <person name="Weissman J.S."/>
        </authorList>
    </citation>
    <scope>LEVEL OF PROTEIN EXPRESSION [LARGE SCALE ANALYSIS]</scope>
</reference>
<reference key="9">
    <citation type="journal article" date="2006" name="Cell">
        <title>Reconstitution, activities, and structure of the eukaryotic RNA exosome.</title>
        <authorList>
            <person name="Liu Q."/>
            <person name="Greimann J.C."/>
            <person name="Lima C.D."/>
        </authorList>
    </citation>
    <scope>RECONSTITUTION OF THE RNA EXOSOME COMPLEX</scope>
    <scope>LACK OF EXONUCLEASE ACTIVITY</scope>
</reference>
<reference key="10">
    <citation type="journal article" date="2007" name="Nat. Struct. Mol. Biol.">
        <title>A single subunit, Dis3, is essentially responsible for yeast exosome core activity.</title>
        <authorList>
            <person name="Dziembowski A."/>
            <person name="Lorentzen E."/>
            <person name="Conti E."/>
            <person name="Seraphin B."/>
        </authorList>
    </citation>
    <scope>IDENTIFICATION BY MASS SPECTROMETRY</scope>
    <scope>FUNCTION</scope>
    <scope>INTERACTION OF THE EXOSOME WITH RRP6 AND SKI7</scope>
    <scope>SUBUNIT</scope>
</reference>
<reference key="11">
    <citation type="journal article" date="2008" name="Mol. Cell. Proteomics">
        <title>A multidimensional chromatography technology for in-depth phosphoproteome analysis.</title>
        <authorList>
            <person name="Albuquerque C.P."/>
            <person name="Smolka M.B."/>
            <person name="Payne S.H."/>
            <person name="Bafna V."/>
            <person name="Eng J."/>
            <person name="Zhou H."/>
        </authorList>
    </citation>
    <scope>PHOSPHORYLATION [LARGE SCALE ANALYSIS] AT SER-28 AND SER-268</scope>
    <scope>IDENTIFICATION BY MASS SPECTROMETRY [LARGE SCALE ANALYSIS]</scope>
</reference>
<reference key="12">
    <citation type="journal article" date="2009" name="Nat. Struct. Mol. Biol.">
        <title>The exosome contains domains with specific endoribonuclease, exoribonuclease and cytoplasmic mRNA decay activities.</title>
        <authorList>
            <person name="Schaeffer D."/>
            <person name="Tsanova B."/>
            <person name="Barbas A."/>
            <person name="Reis F.P."/>
            <person name="Dastidar E.G."/>
            <person name="Sanchez-Rotunno M."/>
            <person name="Arraiano C.M."/>
            <person name="van Hoof A."/>
        </authorList>
    </citation>
    <scope>FUNCTION IN RNA EXOSOME COMPLEX STABILITY</scope>
</reference>
<reference key="13">
    <citation type="journal article" date="2009" name="Science">
        <title>Global analysis of Cdk1 substrate phosphorylation sites provides insights into evolution.</title>
        <authorList>
            <person name="Holt L.J."/>
            <person name="Tuch B.B."/>
            <person name="Villen J."/>
            <person name="Johnson A.D."/>
            <person name="Gygi S.P."/>
            <person name="Morgan D.O."/>
        </authorList>
    </citation>
    <scope>PHOSPHORYLATION [LARGE SCALE ANALYSIS] AT SER-28</scope>
    <scope>IDENTIFICATION BY MASS SPECTROMETRY [LARGE SCALE ANALYSIS]</scope>
</reference>
<reference key="14">
    <citation type="journal article" date="2012" name="Proc. Natl. Acad. Sci. U.S.A.">
        <title>N-terminal acetylome analyses and functional insights of the N-terminal acetyltransferase NatB.</title>
        <authorList>
            <person name="Van Damme P."/>
            <person name="Lasa M."/>
            <person name="Polevoda B."/>
            <person name="Gazquez C."/>
            <person name="Elosegui-Artola A."/>
            <person name="Kim D.S."/>
            <person name="De Juan-Pardo E."/>
            <person name="Demeyer K."/>
            <person name="Hole K."/>
            <person name="Larrea E."/>
            <person name="Timmerman E."/>
            <person name="Prieto J."/>
            <person name="Arnesen T."/>
            <person name="Sherman F."/>
            <person name="Gevaert K."/>
            <person name="Aldabe R."/>
        </authorList>
    </citation>
    <scope>ACETYLATION [LARGE SCALE ANALYSIS] AT SER-2</scope>
    <scope>CLEAVAGE OF INITIATOR METHIONINE [LARGE SCALE ANALYSIS]</scope>
    <scope>IDENTIFICATION BY MASS SPECTROMETRY [LARGE SCALE ANALYSIS]</scope>
</reference>
<gene>
    <name type="primary">RRP4</name>
    <name type="ordered locus">YHR069C</name>
</gene>
<comment type="function">
    <text evidence="5 6 7 8">Non-catalytic component of the RNA exosome complex which has 3'-&gt;5' exoribonuclease activity and participates in a multitude of cellular RNA processing and degradation events. In the nucleus, the RNA exosome complex is involved in proper maturation of stable RNA species such as rRNA, snRNA and snoRNA, in the elimination of RNA processing by-products and non-coding 'pervasive' transcripts, such as antisense RNA species and cryptic unstable transcripts (CUTs), and of mRNAs with processing defects, thereby limiting or excluding their export to the cytoplasm. In the cytoplasm, the RNA exosome complex is involved in general mRNA turnover and in RNA surveillance pathways, preventing translation of aberrant mRNAs. The catalytic inactive RNA exosome core complex of 9 subunits (Exo-9) is proposed to play a pivotal role in the binding and presentation of RNA for ribonucleolysis, and to serve as a scaffold for the association with catalytic subunits and accessory proteins or complexes. RRP4 as peripheral part of the Exo-9 complex is thought to stabilize the hexameric ring of RNase PH-domain subunits.</text>
</comment>
<comment type="subunit">
    <text evidence="2 3 5 8">Component of the RNA exosome complex. Specifically part of the catalytically inactive RNA exosome core complex (Exo-9) which may associate with the catalytic subunits RRP6 and DIS3 in cytoplasmic- and nuclear-specific RNA exosome complex forms. Exo-9 is formed by a hexameric base ring of RNase PH domain-containing subunits and a cap ring consisting of CSL4, RRP4 and RRP40. Interacts with LRP1/RRP47.</text>
</comment>
<comment type="interaction">
    <interactant intactId="EBI-1757">
        <id>P38792</id>
    </interactant>
    <interactant intactId="EBI-1731">
        <id>P53859</id>
        <label>CSL4</label>
    </interactant>
    <organismsDiffer>false</organismsDiffer>
    <experiments>16</experiments>
</comment>
<comment type="interaction">
    <interactant intactId="EBI-1757">
        <id>P38792</id>
    </interactant>
    <interactant intactId="EBI-1740">
        <id>Q08162</id>
        <label>DIS3</label>
    </interactant>
    <organismsDiffer>false</organismsDiffer>
    <experiments>6</experiments>
</comment>
<comment type="interaction">
    <interactant intactId="EBI-1757">
        <id>P38792</id>
    </interactant>
    <interactant intactId="EBI-1788">
        <id>P46948</id>
        <label>SKI6</label>
    </interactant>
    <organismsDiffer>false</organismsDiffer>
    <experiments>5</experiments>
</comment>
<comment type="subcellular location">
    <subcellularLocation>
        <location>Cytoplasm</location>
    </subcellularLocation>
    <subcellularLocation>
        <location>Nucleus</location>
        <location>Nucleolus</location>
    </subcellularLocation>
</comment>
<comment type="miscellaneous">
    <text evidence="4">Present with 4840 molecules/cell in log phase SD medium.</text>
</comment>
<comment type="similarity">
    <text evidence="9">Belongs to the RRP4 family.</text>
</comment>
<comment type="caution">
    <text evidence="9">Was originally (PubMed:9390555, PubMed:8600032) thought to have exonuclease activity but it was later shown (PubMed:17173052, PubMed:17174896) that only DIS3/RRP44 subunit of the exosome core has this activity.</text>
</comment>
<sequence>MSEVITITKRNGAFQNSSNLSYNNTGISDDENDEEDIYMHDVNSASKSESDSQIVTPGELVTDDPIWMRGHGTYFLDNMTYSSVAGTVSRVNRLLSVIPLKGRYAPETGDHVVGRIAEVGNKRWKVDIGGKQHAVLMLGSVNLPGGILRRKSESDELQMRSFLKEGDLLNAEVQSLFQDGSASLHTRSLKYGKLRNGMFCQVPSSLIVRAKNHTHNLPGNITVVLGVNGYIWLRKTSQMDLARDTPSANNSSSIKSTGPTGAVSLNPSITRLEEESSWQIYSDENDPSISNNIRQAICRYANVIKALAFCEIGITQQRIVSAYEASMVYSNVGELIEKNVMESIGSDILTAEKMRGNGN</sequence>
<protein>
    <recommendedName>
        <fullName>Exosome complex component RRP4</fullName>
    </recommendedName>
    <alternativeName>
        <fullName>Ribosomal RNA-processing protein 4</fullName>
    </alternativeName>
</protein>
<keyword id="KW-0002">3D-structure</keyword>
<keyword id="KW-0007">Acetylation</keyword>
<keyword id="KW-0963">Cytoplasm</keyword>
<keyword id="KW-0903">Direct protein sequencing</keyword>
<keyword id="KW-0271">Exosome</keyword>
<keyword id="KW-0539">Nucleus</keyword>
<keyword id="KW-0597">Phosphoprotein</keyword>
<keyword id="KW-1185">Reference proteome</keyword>
<keyword id="KW-0694">RNA-binding</keyword>
<keyword id="KW-0698">rRNA processing</keyword>
<accession>P38792</accession>
<accession>D3DL18</accession>
<dbReference type="EMBL" id="U00061">
    <property type="protein sequence ID" value="AAB68393.1"/>
    <property type="molecule type" value="Genomic_DNA"/>
</dbReference>
<dbReference type="EMBL" id="BK006934">
    <property type="protein sequence ID" value="DAA06762.1"/>
    <property type="molecule type" value="Genomic_DNA"/>
</dbReference>
<dbReference type="PIR" id="S46714">
    <property type="entry name" value="S46714"/>
</dbReference>
<dbReference type="RefSeq" id="NP_011936.1">
    <property type="nucleotide sequence ID" value="NM_001179199.1"/>
</dbReference>
<dbReference type="PDB" id="4IFD">
    <property type="method" value="X-ray"/>
    <property type="resolution" value="2.80 A"/>
    <property type="chains" value="H=1-359"/>
</dbReference>
<dbReference type="PDB" id="4OO1">
    <property type="method" value="X-ray"/>
    <property type="resolution" value="3.30 A"/>
    <property type="chains" value="H=1-359"/>
</dbReference>
<dbReference type="PDB" id="5C0W">
    <property type="method" value="X-ray"/>
    <property type="resolution" value="4.60 A"/>
    <property type="chains" value="H=1-359"/>
</dbReference>
<dbReference type="PDB" id="5C0X">
    <property type="method" value="X-ray"/>
    <property type="resolution" value="3.81 A"/>
    <property type="chains" value="H=1-359"/>
</dbReference>
<dbReference type="PDB" id="5G06">
    <property type="method" value="EM"/>
    <property type="resolution" value="4.20 A"/>
    <property type="chains" value="H=1-359"/>
</dbReference>
<dbReference type="PDB" id="5JEA">
    <property type="method" value="X-ray"/>
    <property type="resolution" value="2.65 A"/>
    <property type="chains" value="H=50-359"/>
</dbReference>
<dbReference type="PDB" id="5K36">
    <property type="method" value="X-ray"/>
    <property type="resolution" value="3.10 A"/>
    <property type="chains" value="H=1-359"/>
</dbReference>
<dbReference type="PDB" id="5OKZ">
    <property type="method" value="X-ray"/>
    <property type="resolution" value="3.20 A"/>
    <property type="chains" value="H/R/b/l=50-359"/>
</dbReference>
<dbReference type="PDB" id="5VZJ">
    <property type="method" value="X-ray"/>
    <property type="resolution" value="3.30 A"/>
    <property type="chains" value="H=1-359"/>
</dbReference>
<dbReference type="PDB" id="6FSZ">
    <property type="method" value="EM"/>
    <property type="resolution" value="4.60 A"/>
    <property type="chains" value="HH=1-359"/>
</dbReference>
<dbReference type="PDB" id="6LQS">
    <property type="method" value="EM"/>
    <property type="resolution" value="3.80 A"/>
    <property type="chains" value="r4=1-359"/>
</dbReference>
<dbReference type="PDB" id="7AJT">
    <property type="method" value="EM"/>
    <property type="resolution" value="4.60 A"/>
    <property type="chains" value="EI=1-359"/>
</dbReference>
<dbReference type="PDB" id="7AJU">
    <property type="method" value="EM"/>
    <property type="resolution" value="3.80 A"/>
    <property type="chains" value="EI=1-359"/>
</dbReference>
<dbReference type="PDB" id="7D4I">
    <property type="method" value="EM"/>
    <property type="resolution" value="4.00 A"/>
    <property type="chains" value="r4=1-359"/>
</dbReference>
<dbReference type="PDB" id="8QCF">
    <property type="method" value="EM"/>
    <property type="resolution" value="2.55 A"/>
    <property type="chains" value="I=1-359"/>
</dbReference>
<dbReference type="PDBsum" id="4IFD"/>
<dbReference type="PDBsum" id="4OO1"/>
<dbReference type="PDBsum" id="5C0W"/>
<dbReference type="PDBsum" id="5C0X"/>
<dbReference type="PDBsum" id="5G06"/>
<dbReference type="PDBsum" id="5JEA"/>
<dbReference type="PDBsum" id="5K36"/>
<dbReference type="PDBsum" id="5OKZ"/>
<dbReference type="PDBsum" id="5VZJ"/>
<dbReference type="PDBsum" id="6FSZ"/>
<dbReference type="PDBsum" id="6LQS"/>
<dbReference type="PDBsum" id="7AJT"/>
<dbReference type="PDBsum" id="7AJU"/>
<dbReference type="PDBsum" id="7D4I"/>
<dbReference type="PDBsum" id="8QCF"/>
<dbReference type="EMDB" id="EMD-0952"/>
<dbReference type="EMDB" id="EMD-11807"/>
<dbReference type="EMDB" id="EMD-11808"/>
<dbReference type="EMDB" id="EMD-18329"/>
<dbReference type="EMDB" id="EMD-30574"/>
<dbReference type="EMDB" id="EMD-4301"/>
<dbReference type="SMR" id="P38792"/>
<dbReference type="BioGRID" id="36501">
    <property type="interactions" value="328"/>
</dbReference>
<dbReference type="ComplexPortal" id="CPX-599">
    <property type="entry name" value="Nuclear/nucleolar exosome complex, DIS3-RRP6 variant"/>
</dbReference>
<dbReference type="ComplexPortal" id="CPX-603">
    <property type="entry name" value="Cytoplasmic exosome complex, DIS3 variant"/>
</dbReference>
<dbReference type="DIP" id="DIP-5888N"/>
<dbReference type="FunCoup" id="P38792">
    <property type="interactions" value="1277"/>
</dbReference>
<dbReference type="IntAct" id="P38792">
    <property type="interactions" value="68"/>
</dbReference>
<dbReference type="MINT" id="P38792"/>
<dbReference type="STRING" id="4932.YHR069C"/>
<dbReference type="GlyGen" id="P38792">
    <property type="glycosylation" value="1 site"/>
</dbReference>
<dbReference type="iPTMnet" id="P38792"/>
<dbReference type="PaxDb" id="4932-YHR069C"/>
<dbReference type="PeptideAtlas" id="P38792"/>
<dbReference type="EnsemblFungi" id="YHR069C_mRNA">
    <property type="protein sequence ID" value="YHR069C"/>
    <property type="gene ID" value="YHR069C"/>
</dbReference>
<dbReference type="GeneID" id="856466"/>
<dbReference type="KEGG" id="sce:YHR069C"/>
<dbReference type="AGR" id="SGD:S000001111"/>
<dbReference type="SGD" id="S000001111">
    <property type="gene designation" value="RRP4"/>
</dbReference>
<dbReference type="VEuPathDB" id="FungiDB:YHR069C"/>
<dbReference type="eggNOG" id="KOG3013">
    <property type="taxonomic scope" value="Eukaryota"/>
</dbReference>
<dbReference type="GeneTree" id="ENSGT00940000153596"/>
<dbReference type="HOGENOM" id="CLU_034114_3_0_1"/>
<dbReference type="InParanoid" id="P38792"/>
<dbReference type="OMA" id="GVNGFIW"/>
<dbReference type="OrthoDB" id="1650at2759"/>
<dbReference type="BioCyc" id="YEAST:G3O-31119-MONOMER"/>
<dbReference type="Reactome" id="R-SCE-429958">
    <property type="pathway name" value="mRNA decay by 3' to 5' exoribonuclease"/>
</dbReference>
<dbReference type="Reactome" id="R-SCE-450385">
    <property type="pathway name" value="Butyrate Response Factor 1 (BRF1) binds and destabilizes mRNA"/>
</dbReference>
<dbReference type="Reactome" id="R-SCE-450513">
    <property type="pathway name" value="Tristetraprolin (TTP, ZFP36) binds and destabilizes mRNA"/>
</dbReference>
<dbReference type="Reactome" id="R-SCE-6791226">
    <property type="pathway name" value="Major pathway of rRNA processing in the nucleolus and cytosol"/>
</dbReference>
<dbReference type="BioGRID-ORCS" id="856466">
    <property type="hits" value="1 hit in 10 CRISPR screens"/>
</dbReference>
<dbReference type="CD-CODE" id="BDAE0F88">
    <property type="entry name" value="Nucleolus"/>
</dbReference>
<dbReference type="EvolutionaryTrace" id="P38792"/>
<dbReference type="PRO" id="PR:P38792"/>
<dbReference type="Proteomes" id="UP000002311">
    <property type="component" value="Chromosome VIII"/>
</dbReference>
<dbReference type="RNAct" id="P38792">
    <property type="molecule type" value="protein"/>
</dbReference>
<dbReference type="GO" id="GO:0000177">
    <property type="term" value="C:cytoplasmic exosome (RNase complex)"/>
    <property type="evidence" value="ECO:0000314"/>
    <property type="project" value="SGD"/>
</dbReference>
<dbReference type="GO" id="GO:0000178">
    <property type="term" value="C:exosome (RNase complex)"/>
    <property type="evidence" value="ECO:0000353"/>
    <property type="project" value="ComplexPortal"/>
</dbReference>
<dbReference type="GO" id="GO:0000176">
    <property type="term" value="C:nuclear exosome (RNase complex)"/>
    <property type="evidence" value="ECO:0000314"/>
    <property type="project" value="SGD"/>
</dbReference>
<dbReference type="GO" id="GO:0005730">
    <property type="term" value="C:nucleolus"/>
    <property type="evidence" value="ECO:0000314"/>
    <property type="project" value="ComplexPortal"/>
</dbReference>
<dbReference type="GO" id="GO:0005634">
    <property type="term" value="C:nucleus"/>
    <property type="evidence" value="ECO:0000314"/>
    <property type="project" value="ComplexPortal"/>
</dbReference>
<dbReference type="GO" id="GO:0003723">
    <property type="term" value="F:RNA binding"/>
    <property type="evidence" value="ECO:0000318"/>
    <property type="project" value="GO_Central"/>
</dbReference>
<dbReference type="GO" id="GO:0071034">
    <property type="term" value="P:CUT catabolic process"/>
    <property type="evidence" value="ECO:0000318"/>
    <property type="project" value="GO_Central"/>
</dbReference>
<dbReference type="GO" id="GO:0000467">
    <property type="term" value="P:exonucleolytic trimming to generate mature 3'-end of 5.8S rRNA from tricistronic rRNA transcript (SSU-rRNA, 5.8S rRNA, LSU-rRNA)"/>
    <property type="evidence" value="ECO:0000315"/>
    <property type="project" value="SGD"/>
</dbReference>
<dbReference type="GO" id="GO:0071028">
    <property type="term" value="P:nuclear mRNA surveillance"/>
    <property type="evidence" value="ECO:0000316"/>
    <property type="project" value="SGD"/>
</dbReference>
<dbReference type="GO" id="GO:0071035">
    <property type="term" value="P:nuclear polyadenylation-dependent rRNA catabolic process"/>
    <property type="evidence" value="ECO:0000315"/>
    <property type="project" value="SGD"/>
</dbReference>
<dbReference type="GO" id="GO:0000956">
    <property type="term" value="P:nuclear-transcribed mRNA catabolic process"/>
    <property type="evidence" value="ECO:0000315"/>
    <property type="project" value="SGD"/>
</dbReference>
<dbReference type="GO" id="GO:0071051">
    <property type="term" value="P:poly(A)-dependent snoRNA 3'-end processing"/>
    <property type="evidence" value="ECO:0000315"/>
    <property type="project" value="SGD"/>
</dbReference>
<dbReference type="GO" id="GO:0006401">
    <property type="term" value="P:RNA catabolic process"/>
    <property type="evidence" value="ECO:0000314"/>
    <property type="project" value="ComplexPortal"/>
</dbReference>
<dbReference type="GO" id="GO:0006396">
    <property type="term" value="P:RNA processing"/>
    <property type="evidence" value="ECO:0000314"/>
    <property type="project" value="ComplexPortal"/>
</dbReference>
<dbReference type="GO" id="GO:0071038">
    <property type="term" value="P:TRAMP-dependent tRNA surveillance pathway"/>
    <property type="evidence" value="ECO:0000314"/>
    <property type="project" value="SGD"/>
</dbReference>
<dbReference type="GO" id="GO:0034475">
    <property type="term" value="P:U4 snRNA 3'-end processing"/>
    <property type="evidence" value="ECO:0000315"/>
    <property type="project" value="SGD"/>
</dbReference>
<dbReference type="CDD" id="cd22525">
    <property type="entry name" value="KH-I_Rrp4_eukar"/>
    <property type="match status" value="1"/>
</dbReference>
<dbReference type="CDD" id="cd05789">
    <property type="entry name" value="S1_Rrp4"/>
    <property type="match status" value="1"/>
</dbReference>
<dbReference type="FunFam" id="2.40.50.100:FF:000063">
    <property type="entry name" value="Exosome complex component RRP4"/>
    <property type="match status" value="1"/>
</dbReference>
<dbReference type="FunFam" id="2.40.50.140:FF:000038">
    <property type="entry name" value="Exosome complex component RRP4"/>
    <property type="match status" value="1"/>
</dbReference>
<dbReference type="Gene3D" id="2.40.50.100">
    <property type="match status" value="1"/>
</dbReference>
<dbReference type="Gene3D" id="2.40.50.140">
    <property type="entry name" value="Nucleic acid-binding proteins"/>
    <property type="match status" value="1"/>
</dbReference>
<dbReference type="InterPro" id="IPR025721">
    <property type="entry name" value="Exosome_cplx_N_dom"/>
</dbReference>
<dbReference type="InterPro" id="IPR026699">
    <property type="entry name" value="Exosome_RNA_bind1/RRP40/RRP4"/>
</dbReference>
<dbReference type="InterPro" id="IPR004088">
    <property type="entry name" value="KH_dom_type_1"/>
</dbReference>
<dbReference type="InterPro" id="IPR036612">
    <property type="entry name" value="KH_dom_type_1_sf"/>
</dbReference>
<dbReference type="InterPro" id="IPR012340">
    <property type="entry name" value="NA-bd_OB-fold"/>
</dbReference>
<dbReference type="InterPro" id="IPR048565">
    <property type="entry name" value="RRP4_S1"/>
</dbReference>
<dbReference type="PANTHER" id="PTHR21321:SF4">
    <property type="entry name" value="EXOSOME COMPLEX COMPONENT RRP4"/>
    <property type="match status" value="1"/>
</dbReference>
<dbReference type="PANTHER" id="PTHR21321">
    <property type="entry name" value="PNAS-3 RELATED"/>
    <property type="match status" value="1"/>
</dbReference>
<dbReference type="Pfam" id="PF14382">
    <property type="entry name" value="ECR1_N"/>
    <property type="match status" value="1"/>
</dbReference>
<dbReference type="Pfam" id="PF15985">
    <property type="entry name" value="KH_6"/>
    <property type="match status" value="1"/>
</dbReference>
<dbReference type="Pfam" id="PF21266">
    <property type="entry name" value="RRP4_S1"/>
    <property type="match status" value="1"/>
</dbReference>
<dbReference type="SUPFAM" id="SSF54791">
    <property type="entry name" value="Eukaryotic type KH-domain (KH-domain type I)"/>
    <property type="match status" value="1"/>
</dbReference>
<dbReference type="SUPFAM" id="SSF50249">
    <property type="entry name" value="Nucleic acid-binding proteins"/>
    <property type="match status" value="1"/>
</dbReference>
<dbReference type="SUPFAM" id="SSF110324">
    <property type="entry name" value="Ribosomal L27 protein-like"/>
    <property type="match status" value="1"/>
</dbReference>